<feature type="chain" id="PRO_0000205876" description="Cell division topological specificity factor">
    <location>
        <begin position="1"/>
        <end position="88"/>
    </location>
</feature>
<sequence length="88" mass="10235">MALLDFFLSRKKNTANIAKERLQIIVAERRRSDAEPHYLPQLRKDILEVICKYVQIDPEMVTVQLEQKDGDISILELNVTLPEAEELK</sequence>
<protein>
    <recommendedName>
        <fullName>Cell division topological specificity factor</fullName>
    </recommendedName>
</protein>
<reference key="1">
    <citation type="journal article" date="2001" name="Nature">
        <title>Genome sequence of enterohaemorrhagic Escherichia coli O157:H7.</title>
        <authorList>
            <person name="Perna N.T."/>
            <person name="Plunkett G. III"/>
            <person name="Burland V."/>
            <person name="Mau B."/>
            <person name="Glasner J.D."/>
            <person name="Rose D.J."/>
            <person name="Mayhew G.F."/>
            <person name="Evans P.S."/>
            <person name="Gregor J."/>
            <person name="Kirkpatrick H.A."/>
            <person name="Posfai G."/>
            <person name="Hackett J."/>
            <person name="Klink S."/>
            <person name="Boutin A."/>
            <person name="Shao Y."/>
            <person name="Miller L."/>
            <person name="Grotbeck E.J."/>
            <person name="Davis N.W."/>
            <person name="Lim A."/>
            <person name="Dimalanta E.T."/>
            <person name="Potamousis K."/>
            <person name="Apodaca J."/>
            <person name="Anantharaman T.S."/>
            <person name="Lin J."/>
            <person name="Yen G."/>
            <person name="Schwartz D.C."/>
            <person name="Welch R.A."/>
            <person name="Blattner F.R."/>
        </authorList>
    </citation>
    <scope>NUCLEOTIDE SEQUENCE [LARGE SCALE GENOMIC DNA]</scope>
    <source>
        <strain>O157:H7 / EDL933 / ATCC 700927 / EHEC</strain>
    </source>
</reference>
<reference key="2">
    <citation type="journal article" date="2001" name="DNA Res.">
        <title>Complete genome sequence of enterohemorrhagic Escherichia coli O157:H7 and genomic comparison with a laboratory strain K-12.</title>
        <authorList>
            <person name="Hayashi T."/>
            <person name="Makino K."/>
            <person name="Ohnishi M."/>
            <person name="Kurokawa K."/>
            <person name="Ishii K."/>
            <person name="Yokoyama K."/>
            <person name="Han C.-G."/>
            <person name="Ohtsubo E."/>
            <person name="Nakayama K."/>
            <person name="Murata T."/>
            <person name="Tanaka M."/>
            <person name="Tobe T."/>
            <person name="Iida T."/>
            <person name="Takami H."/>
            <person name="Honda T."/>
            <person name="Sasakawa C."/>
            <person name="Ogasawara N."/>
            <person name="Yasunaga T."/>
            <person name="Kuhara S."/>
            <person name="Shiba T."/>
            <person name="Hattori M."/>
            <person name="Shinagawa H."/>
        </authorList>
    </citation>
    <scope>NUCLEOTIDE SEQUENCE [LARGE SCALE GENOMIC DNA]</scope>
    <source>
        <strain>O157:H7 / Sakai / RIMD 0509952 / EHEC</strain>
    </source>
</reference>
<organism>
    <name type="scientific">Escherichia coli O157:H7</name>
    <dbReference type="NCBI Taxonomy" id="83334"/>
    <lineage>
        <taxon>Bacteria</taxon>
        <taxon>Pseudomonadati</taxon>
        <taxon>Pseudomonadota</taxon>
        <taxon>Gammaproteobacteria</taxon>
        <taxon>Enterobacterales</taxon>
        <taxon>Enterobacteriaceae</taxon>
        <taxon>Escherichia</taxon>
    </lineage>
</organism>
<proteinExistence type="inferred from homology"/>
<accession>P0A736</accession>
<accession>P18198</accession>
<dbReference type="EMBL" id="AE005174">
    <property type="protein sequence ID" value="AAG56025.1"/>
    <property type="molecule type" value="Genomic_DNA"/>
</dbReference>
<dbReference type="EMBL" id="BA000007">
    <property type="protein sequence ID" value="BAB35091.1"/>
    <property type="molecule type" value="Genomic_DNA"/>
</dbReference>
<dbReference type="PIR" id="D90837">
    <property type="entry name" value="D90837"/>
</dbReference>
<dbReference type="PIR" id="E85695">
    <property type="entry name" value="E85695"/>
</dbReference>
<dbReference type="RefSeq" id="NP_309695.1">
    <property type="nucleotide sequence ID" value="NC_002695.1"/>
</dbReference>
<dbReference type="RefSeq" id="WP_001185665.1">
    <property type="nucleotide sequence ID" value="NZ_VOAI01000042.1"/>
</dbReference>
<dbReference type="SMR" id="P0A736"/>
<dbReference type="STRING" id="155864.Z1936"/>
<dbReference type="GeneID" id="913206"/>
<dbReference type="GeneID" id="93776260"/>
<dbReference type="KEGG" id="ece:Z1936"/>
<dbReference type="KEGG" id="ecs:ECs_1668"/>
<dbReference type="PATRIC" id="fig|386585.9.peg.1764"/>
<dbReference type="eggNOG" id="COG0851">
    <property type="taxonomic scope" value="Bacteria"/>
</dbReference>
<dbReference type="HOGENOM" id="CLU_137929_2_2_6"/>
<dbReference type="OMA" id="FNKQRTA"/>
<dbReference type="Proteomes" id="UP000000558">
    <property type="component" value="Chromosome"/>
</dbReference>
<dbReference type="Proteomes" id="UP000002519">
    <property type="component" value="Chromosome"/>
</dbReference>
<dbReference type="GO" id="GO:0051301">
    <property type="term" value="P:cell division"/>
    <property type="evidence" value="ECO:0007669"/>
    <property type="project" value="UniProtKB-KW"/>
</dbReference>
<dbReference type="GO" id="GO:0032955">
    <property type="term" value="P:regulation of division septum assembly"/>
    <property type="evidence" value="ECO:0007669"/>
    <property type="project" value="InterPro"/>
</dbReference>
<dbReference type="FunFam" id="3.30.1070.10:FF:000001">
    <property type="entry name" value="Cell division topological specificity factor"/>
    <property type="match status" value="1"/>
</dbReference>
<dbReference type="Gene3D" id="3.30.1070.10">
    <property type="entry name" value="Cell division topological specificity factor MinE"/>
    <property type="match status" value="1"/>
</dbReference>
<dbReference type="HAMAP" id="MF_00262">
    <property type="entry name" value="MinE"/>
    <property type="match status" value="1"/>
</dbReference>
<dbReference type="InterPro" id="IPR005527">
    <property type="entry name" value="MinE"/>
</dbReference>
<dbReference type="InterPro" id="IPR036707">
    <property type="entry name" value="MinE_sf"/>
</dbReference>
<dbReference type="NCBIfam" id="TIGR01215">
    <property type="entry name" value="minE"/>
    <property type="match status" value="1"/>
</dbReference>
<dbReference type="NCBIfam" id="NF001422">
    <property type="entry name" value="PRK00296.1"/>
    <property type="match status" value="1"/>
</dbReference>
<dbReference type="Pfam" id="PF03776">
    <property type="entry name" value="MinE"/>
    <property type="match status" value="1"/>
</dbReference>
<dbReference type="SUPFAM" id="SSF55229">
    <property type="entry name" value="Cell division protein MinE topological specificity domain"/>
    <property type="match status" value="1"/>
</dbReference>
<comment type="function">
    <text evidence="1">Prevents the cell division inhibition by proteins MinC and MinD at internal division sites while permitting inhibition at polar sites. This ensures cell division at the proper site by restricting the formation of a division septum at the midpoint of the long axis of the cell (By similarity).</text>
</comment>
<comment type="similarity">
    <text evidence="2">Belongs to the MinE family.</text>
</comment>
<keyword id="KW-0131">Cell cycle</keyword>
<keyword id="KW-0132">Cell division</keyword>
<keyword id="KW-1185">Reference proteome</keyword>
<name>MINE_ECO57</name>
<evidence type="ECO:0000250" key="1"/>
<evidence type="ECO:0000305" key="2"/>
<gene>
    <name type="primary">minE</name>
    <name type="ordered locus">Z1936</name>
    <name type="ordered locus">ECs1668</name>
</gene>